<sequence>MKLRIGHGFDVHKFGGDKPLILGGVTVPYDTGLIAHSDGDVVLHAISDAILGAMALGDIGKHFPDTDDAFSGADSRVLLRHCYQLALNKHFQLGNLDVTVIAQAPKMAPHIEAIRQLLALDLNTDIDNINVKATTTEKLGFTGRKEGIAVEAVVLMQQAI</sequence>
<dbReference type="EC" id="4.6.1.12" evidence="1"/>
<dbReference type="EMBL" id="CP000302">
    <property type="protein sequence ID" value="ABE54485.1"/>
    <property type="molecule type" value="Genomic_DNA"/>
</dbReference>
<dbReference type="RefSeq" id="WP_011495645.1">
    <property type="nucleotide sequence ID" value="NC_007954.1"/>
</dbReference>
<dbReference type="SMR" id="Q12PZ1"/>
<dbReference type="STRING" id="318161.Sden_1199"/>
<dbReference type="KEGG" id="sdn:Sden_1199"/>
<dbReference type="eggNOG" id="COG0245">
    <property type="taxonomic scope" value="Bacteria"/>
</dbReference>
<dbReference type="HOGENOM" id="CLU_084630_2_0_6"/>
<dbReference type="OrthoDB" id="9804336at2"/>
<dbReference type="UniPathway" id="UPA00056">
    <property type="reaction ID" value="UER00095"/>
</dbReference>
<dbReference type="Proteomes" id="UP000001982">
    <property type="component" value="Chromosome"/>
</dbReference>
<dbReference type="GO" id="GO:0008685">
    <property type="term" value="F:2-C-methyl-D-erythritol 2,4-cyclodiphosphate synthase activity"/>
    <property type="evidence" value="ECO:0007669"/>
    <property type="project" value="UniProtKB-UniRule"/>
</dbReference>
<dbReference type="GO" id="GO:0046872">
    <property type="term" value="F:metal ion binding"/>
    <property type="evidence" value="ECO:0007669"/>
    <property type="project" value="UniProtKB-KW"/>
</dbReference>
<dbReference type="GO" id="GO:0019288">
    <property type="term" value="P:isopentenyl diphosphate biosynthetic process, methylerythritol 4-phosphate pathway"/>
    <property type="evidence" value="ECO:0007669"/>
    <property type="project" value="UniProtKB-UniRule"/>
</dbReference>
<dbReference type="GO" id="GO:0016114">
    <property type="term" value="P:terpenoid biosynthetic process"/>
    <property type="evidence" value="ECO:0007669"/>
    <property type="project" value="InterPro"/>
</dbReference>
<dbReference type="CDD" id="cd00554">
    <property type="entry name" value="MECDP_synthase"/>
    <property type="match status" value="1"/>
</dbReference>
<dbReference type="FunFam" id="3.30.1330.50:FF:000001">
    <property type="entry name" value="2-C-methyl-D-erythritol 2,4-cyclodiphosphate synthase"/>
    <property type="match status" value="1"/>
</dbReference>
<dbReference type="Gene3D" id="3.30.1330.50">
    <property type="entry name" value="2-C-methyl-D-erythritol 2,4-cyclodiphosphate synthase"/>
    <property type="match status" value="1"/>
</dbReference>
<dbReference type="HAMAP" id="MF_00107">
    <property type="entry name" value="IspF"/>
    <property type="match status" value="1"/>
</dbReference>
<dbReference type="InterPro" id="IPR003526">
    <property type="entry name" value="MECDP_synthase"/>
</dbReference>
<dbReference type="InterPro" id="IPR020555">
    <property type="entry name" value="MECDP_synthase_CS"/>
</dbReference>
<dbReference type="InterPro" id="IPR036571">
    <property type="entry name" value="MECDP_synthase_sf"/>
</dbReference>
<dbReference type="NCBIfam" id="TIGR00151">
    <property type="entry name" value="ispF"/>
    <property type="match status" value="1"/>
</dbReference>
<dbReference type="PANTHER" id="PTHR43181">
    <property type="entry name" value="2-C-METHYL-D-ERYTHRITOL 2,4-CYCLODIPHOSPHATE SYNTHASE, CHLOROPLASTIC"/>
    <property type="match status" value="1"/>
</dbReference>
<dbReference type="PANTHER" id="PTHR43181:SF1">
    <property type="entry name" value="2-C-METHYL-D-ERYTHRITOL 2,4-CYCLODIPHOSPHATE SYNTHASE, CHLOROPLASTIC"/>
    <property type="match status" value="1"/>
</dbReference>
<dbReference type="Pfam" id="PF02542">
    <property type="entry name" value="YgbB"/>
    <property type="match status" value="1"/>
</dbReference>
<dbReference type="SUPFAM" id="SSF69765">
    <property type="entry name" value="IpsF-like"/>
    <property type="match status" value="1"/>
</dbReference>
<dbReference type="PROSITE" id="PS01350">
    <property type="entry name" value="ISPF"/>
    <property type="match status" value="1"/>
</dbReference>
<accession>Q12PZ1</accession>
<name>ISPF_SHEDO</name>
<keyword id="KW-0414">Isoprene biosynthesis</keyword>
<keyword id="KW-0456">Lyase</keyword>
<keyword id="KW-0479">Metal-binding</keyword>
<keyword id="KW-1185">Reference proteome</keyword>
<gene>
    <name evidence="1" type="primary">ispF</name>
    <name type="ordered locus">Sden_1199</name>
</gene>
<feature type="chain" id="PRO_1000022878" description="2-C-methyl-D-erythritol 2,4-cyclodiphosphate synthase">
    <location>
        <begin position="1"/>
        <end position="160"/>
    </location>
</feature>
<feature type="binding site" evidence="1">
    <location>
        <begin position="10"/>
        <end position="12"/>
    </location>
    <ligand>
        <name>4-CDP-2-C-methyl-D-erythritol 2-phosphate</name>
        <dbReference type="ChEBI" id="CHEBI:57919"/>
    </ligand>
</feature>
<feature type="binding site" evidence="1">
    <location>
        <position position="10"/>
    </location>
    <ligand>
        <name>a divalent metal cation</name>
        <dbReference type="ChEBI" id="CHEBI:60240"/>
    </ligand>
</feature>
<feature type="binding site" evidence="1">
    <location>
        <position position="12"/>
    </location>
    <ligand>
        <name>a divalent metal cation</name>
        <dbReference type="ChEBI" id="CHEBI:60240"/>
    </ligand>
</feature>
<feature type="binding site" evidence="1">
    <location>
        <begin position="36"/>
        <end position="37"/>
    </location>
    <ligand>
        <name>4-CDP-2-C-methyl-D-erythritol 2-phosphate</name>
        <dbReference type="ChEBI" id="CHEBI:57919"/>
    </ligand>
</feature>
<feature type="binding site" evidence="1">
    <location>
        <position position="44"/>
    </location>
    <ligand>
        <name>a divalent metal cation</name>
        <dbReference type="ChEBI" id="CHEBI:60240"/>
    </ligand>
</feature>
<feature type="binding site" evidence="1">
    <location>
        <begin position="58"/>
        <end position="60"/>
    </location>
    <ligand>
        <name>4-CDP-2-C-methyl-D-erythritol 2-phosphate</name>
        <dbReference type="ChEBI" id="CHEBI:57919"/>
    </ligand>
</feature>
<feature type="binding site" evidence="1">
    <location>
        <begin position="63"/>
        <end position="67"/>
    </location>
    <ligand>
        <name>4-CDP-2-C-methyl-D-erythritol 2-phosphate</name>
        <dbReference type="ChEBI" id="CHEBI:57919"/>
    </ligand>
</feature>
<feature type="binding site" evidence="1">
    <location>
        <begin position="102"/>
        <end position="108"/>
    </location>
    <ligand>
        <name>4-CDP-2-C-methyl-D-erythritol 2-phosphate</name>
        <dbReference type="ChEBI" id="CHEBI:57919"/>
    </ligand>
</feature>
<feature type="binding site" evidence="1">
    <location>
        <begin position="134"/>
        <end position="137"/>
    </location>
    <ligand>
        <name>4-CDP-2-C-methyl-D-erythritol 2-phosphate</name>
        <dbReference type="ChEBI" id="CHEBI:57919"/>
    </ligand>
</feature>
<feature type="binding site" evidence="1">
    <location>
        <position position="141"/>
    </location>
    <ligand>
        <name>4-CDP-2-C-methyl-D-erythritol 2-phosphate</name>
        <dbReference type="ChEBI" id="CHEBI:57919"/>
    </ligand>
</feature>
<feature type="binding site" evidence="1">
    <location>
        <position position="144"/>
    </location>
    <ligand>
        <name>4-CDP-2-C-methyl-D-erythritol 2-phosphate</name>
        <dbReference type="ChEBI" id="CHEBI:57919"/>
    </ligand>
</feature>
<feature type="site" description="Transition state stabilizer" evidence="1">
    <location>
        <position position="36"/>
    </location>
</feature>
<feature type="site" description="Transition state stabilizer" evidence="1">
    <location>
        <position position="135"/>
    </location>
</feature>
<protein>
    <recommendedName>
        <fullName evidence="1">2-C-methyl-D-erythritol 2,4-cyclodiphosphate synthase</fullName>
        <shortName evidence="1">MECDP-synthase</shortName>
        <shortName evidence="1">MECPP-synthase</shortName>
        <shortName evidence="1">MECPS</shortName>
        <ecNumber evidence="1">4.6.1.12</ecNumber>
    </recommendedName>
</protein>
<evidence type="ECO:0000255" key="1">
    <source>
        <dbReference type="HAMAP-Rule" id="MF_00107"/>
    </source>
</evidence>
<reference key="1">
    <citation type="submission" date="2006-03" db="EMBL/GenBank/DDBJ databases">
        <title>Complete sequence of Shewanella denitrificans OS217.</title>
        <authorList>
            <consortium name="US DOE Joint Genome Institute"/>
            <person name="Copeland A."/>
            <person name="Lucas S."/>
            <person name="Lapidus A."/>
            <person name="Barry K."/>
            <person name="Detter J.C."/>
            <person name="Glavina del Rio T."/>
            <person name="Hammon N."/>
            <person name="Israni S."/>
            <person name="Dalin E."/>
            <person name="Tice H."/>
            <person name="Pitluck S."/>
            <person name="Brettin T."/>
            <person name="Bruce D."/>
            <person name="Han C."/>
            <person name="Tapia R."/>
            <person name="Gilna P."/>
            <person name="Kiss H."/>
            <person name="Schmutz J."/>
            <person name="Larimer F."/>
            <person name="Land M."/>
            <person name="Hauser L."/>
            <person name="Kyrpides N."/>
            <person name="Lykidis A."/>
            <person name="Richardson P."/>
        </authorList>
    </citation>
    <scope>NUCLEOTIDE SEQUENCE [LARGE SCALE GENOMIC DNA]</scope>
    <source>
        <strain>OS217 / ATCC BAA-1090 / DSM 15013</strain>
    </source>
</reference>
<organism>
    <name type="scientific">Shewanella denitrificans (strain OS217 / ATCC BAA-1090 / DSM 15013)</name>
    <dbReference type="NCBI Taxonomy" id="318161"/>
    <lineage>
        <taxon>Bacteria</taxon>
        <taxon>Pseudomonadati</taxon>
        <taxon>Pseudomonadota</taxon>
        <taxon>Gammaproteobacteria</taxon>
        <taxon>Alteromonadales</taxon>
        <taxon>Shewanellaceae</taxon>
        <taxon>Shewanella</taxon>
    </lineage>
</organism>
<proteinExistence type="inferred from homology"/>
<comment type="function">
    <text evidence="1">Involved in the biosynthesis of isopentenyl diphosphate (IPP) and dimethylallyl diphosphate (DMAPP), two major building blocks of isoprenoid compounds. Catalyzes the conversion of 4-diphosphocytidyl-2-C-methyl-D-erythritol 2-phosphate (CDP-ME2P) to 2-C-methyl-D-erythritol 2,4-cyclodiphosphate (ME-CPP) with a corresponding release of cytidine 5-monophosphate (CMP).</text>
</comment>
<comment type="catalytic activity">
    <reaction evidence="1">
        <text>4-CDP-2-C-methyl-D-erythritol 2-phosphate = 2-C-methyl-D-erythritol 2,4-cyclic diphosphate + CMP</text>
        <dbReference type="Rhea" id="RHEA:23864"/>
        <dbReference type="ChEBI" id="CHEBI:57919"/>
        <dbReference type="ChEBI" id="CHEBI:58483"/>
        <dbReference type="ChEBI" id="CHEBI:60377"/>
        <dbReference type="EC" id="4.6.1.12"/>
    </reaction>
</comment>
<comment type="cofactor">
    <cofactor evidence="1">
        <name>a divalent metal cation</name>
        <dbReference type="ChEBI" id="CHEBI:60240"/>
    </cofactor>
    <text evidence="1">Binds 1 divalent metal cation per subunit.</text>
</comment>
<comment type="pathway">
    <text evidence="1">Isoprenoid biosynthesis; isopentenyl diphosphate biosynthesis via DXP pathway; isopentenyl diphosphate from 1-deoxy-D-xylulose 5-phosphate: step 4/6.</text>
</comment>
<comment type="subunit">
    <text evidence="1">Homotrimer.</text>
</comment>
<comment type="similarity">
    <text evidence="1">Belongs to the IspF family.</text>
</comment>